<dbReference type="EC" id="2.1.1.213"/>
<dbReference type="EMBL" id="L77117">
    <property type="protein sequence ID" value="AAB98704.1"/>
    <property type="molecule type" value="Genomic_DNA"/>
</dbReference>
<dbReference type="PIR" id="F64388">
    <property type="entry name" value="F64388"/>
</dbReference>
<dbReference type="RefSeq" id="WP_010870216.1">
    <property type="nucleotide sequence ID" value="NC_000909.1"/>
</dbReference>
<dbReference type="SMR" id="Q58120"/>
<dbReference type="FunCoup" id="Q58120">
    <property type="interactions" value="33"/>
</dbReference>
<dbReference type="STRING" id="243232.MJ_0710"/>
<dbReference type="PaxDb" id="243232-MJ_0710"/>
<dbReference type="EnsemblBacteria" id="AAB98704">
    <property type="protein sequence ID" value="AAB98704"/>
    <property type="gene ID" value="MJ_0710"/>
</dbReference>
<dbReference type="GeneID" id="1451578"/>
<dbReference type="KEGG" id="mja:MJ_0710"/>
<dbReference type="eggNOG" id="arCOG00047">
    <property type="taxonomic scope" value="Archaea"/>
</dbReference>
<dbReference type="HOGENOM" id="CLU_057819_1_0_2"/>
<dbReference type="InParanoid" id="Q58120"/>
<dbReference type="OrthoDB" id="7080at2157"/>
<dbReference type="PhylomeDB" id="Q58120"/>
<dbReference type="Proteomes" id="UP000000805">
    <property type="component" value="Chromosome"/>
</dbReference>
<dbReference type="GO" id="GO:0005737">
    <property type="term" value="C:cytoplasm"/>
    <property type="evidence" value="ECO:0007669"/>
    <property type="project" value="UniProtKB-SubCell"/>
</dbReference>
<dbReference type="GO" id="GO:0160101">
    <property type="term" value="F:tRNA (guanine(10)-N2)-dimethyltransferase activity"/>
    <property type="evidence" value="ECO:0007669"/>
    <property type="project" value="UniProtKB-EC"/>
</dbReference>
<dbReference type="GO" id="GO:0160102">
    <property type="term" value="F:tRNA (guanine(10)-N2)-methyltransferase activity"/>
    <property type="evidence" value="ECO:0007669"/>
    <property type="project" value="InterPro"/>
</dbReference>
<dbReference type="GO" id="GO:0000049">
    <property type="term" value="F:tRNA binding"/>
    <property type="evidence" value="ECO:0007669"/>
    <property type="project" value="UniProtKB-KW"/>
</dbReference>
<dbReference type="GO" id="GO:0030488">
    <property type="term" value="P:tRNA methylation"/>
    <property type="evidence" value="ECO:0007669"/>
    <property type="project" value="InterPro"/>
</dbReference>
<dbReference type="CDD" id="cd02440">
    <property type="entry name" value="AdoMet_MTases"/>
    <property type="match status" value="1"/>
</dbReference>
<dbReference type="CDD" id="cd11715">
    <property type="entry name" value="THUMP_AdoMetMT"/>
    <property type="match status" value="1"/>
</dbReference>
<dbReference type="FunFam" id="3.30.2130.30:FF:000016">
    <property type="entry name" value="N2-methylguanosine tRNA methyltransferase"/>
    <property type="match status" value="1"/>
</dbReference>
<dbReference type="FunFam" id="3.40.50.150:FF:000251">
    <property type="entry name" value="Putative RNA methylase"/>
    <property type="match status" value="1"/>
</dbReference>
<dbReference type="Gene3D" id="3.30.2130.30">
    <property type="match status" value="1"/>
</dbReference>
<dbReference type="Gene3D" id="3.40.50.150">
    <property type="entry name" value="Vaccinia Virus protein VP39"/>
    <property type="match status" value="1"/>
</dbReference>
<dbReference type="InterPro" id="IPR002052">
    <property type="entry name" value="DNA_methylase_N6_adenine_CS"/>
</dbReference>
<dbReference type="InterPro" id="IPR000241">
    <property type="entry name" value="RlmKL-like_Mtase"/>
</dbReference>
<dbReference type="InterPro" id="IPR053943">
    <property type="entry name" value="RlmKL-like_Mtase_CS"/>
</dbReference>
<dbReference type="InterPro" id="IPR029063">
    <property type="entry name" value="SAM-dependent_MTases_sf"/>
</dbReference>
<dbReference type="InterPro" id="IPR004114">
    <property type="entry name" value="THUMP_dom"/>
</dbReference>
<dbReference type="InterPro" id="IPR005885">
    <property type="entry name" value="TrmG10"/>
</dbReference>
<dbReference type="NCBIfam" id="TIGR01177">
    <property type="entry name" value="TIGR01177 family methyltransferase"/>
    <property type="match status" value="1"/>
</dbReference>
<dbReference type="PANTHER" id="PTHR14911">
    <property type="entry name" value="THUMP DOMAIN-CONTAINING"/>
    <property type="match status" value="1"/>
</dbReference>
<dbReference type="PANTHER" id="PTHR14911:SF13">
    <property type="entry name" value="TRNA (GUANINE(6)-N2)-METHYLTRANSFERASE THUMP3"/>
    <property type="match status" value="1"/>
</dbReference>
<dbReference type="Pfam" id="PF02926">
    <property type="entry name" value="THUMP"/>
    <property type="match status" value="1"/>
</dbReference>
<dbReference type="Pfam" id="PF01170">
    <property type="entry name" value="UPF0020"/>
    <property type="match status" value="1"/>
</dbReference>
<dbReference type="PIRSF" id="PIRSF017259">
    <property type="entry name" value="tRNA_mtfrase_TRM11"/>
    <property type="match status" value="1"/>
</dbReference>
<dbReference type="PRINTS" id="PR00507">
    <property type="entry name" value="N12N6MTFRASE"/>
</dbReference>
<dbReference type="SMART" id="SM00981">
    <property type="entry name" value="THUMP"/>
    <property type="match status" value="1"/>
</dbReference>
<dbReference type="SUPFAM" id="SSF53335">
    <property type="entry name" value="S-adenosyl-L-methionine-dependent methyltransferases"/>
    <property type="match status" value="1"/>
</dbReference>
<dbReference type="SUPFAM" id="SSF143437">
    <property type="entry name" value="THUMP domain-like"/>
    <property type="match status" value="1"/>
</dbReference>
<dbReference type="PROSITE" id="PS51165">
    <property type="entry name" value="THUMP"/>
    <property type="match status" value="1"/>
</dbReference>
<dbReference type="PROSITE" id="PS01261">
    <property type="entry name" value="UPF0020"/>
    <property type="match status" value="1"/>
</dbReference>
<accession>Q58120</accession>
<comment type="function">
    <text evidence="1">Catalyzes the adenosylmethionine-dependent methylation of the exocyclic amino group (N(2)) of guanosine at position 10 of various tRNAs. Acts via a two-step process that leads to the formation of either N(2)-monomethyl (m(2)G) or N(2)-dimethylguanosine (m(2)(2)G) (By similarity).</text>
</comment>
<comment type="catalytic activity">
    <reaction>
        <text>guanosine(10) in tRNA + 2 S-adenosyl-L-methionine = N(2)-dimethylguanosine(10) in tRNA + 2 S-adenosyl-L-homocysteine + 2 H(+)</text>
        <dbReference type="Rhea" id="RHEA:43124"/>
        <dbReference type="Rhea" id="RHEA-COMP:10355"/>
        <dbReference type="Rhea" id="RHEA-COMP:10358"/>
        <dbReference type="ChEBI" id="CHEBI:15378"/>
        <dbReference type="ChEBI" id="CHEBI:57856"/>
        <dbReference type="ChEBI" id="CHEBI:59789"/>
        <dbReference type="ChEBI" id="CHEBI:74269"/>
        <dbReference type="ChEBI" id="CHEBI:74513"/>
        <dbReference type="EC" id="2.1.1.213"/>
    </reaction>
</comment>
<comment type="subunit">
    <text evidence="1">Monomer.</text>
</comment>
<comment type="subcellular location">
    <subcellularLocation>
        <location evidence="3">Cytoplasm</location>
    </subcellularLocation>
</comment>
<comment type="similarity">
    <text evidence="3">Belongs to the methyltransferase superfamily. Trm-G10 family.</text>
</comment>
<proteinExistence type="inferred from homology"/>
<name>TMG10_METJA</name>
<keyword id="KW-0963">Cytoplasm</keyword>
<keyword id="KW-0489">Methyltransferase</keyword>
<keyword id="KW-1185">Reference proteome</keyword>
<keyword id="KW-0694">RNA-binding</keyword>
<keyword id="KW-0949">S-adenosyl-L-methionine</keyword>
<keyword id="KW-0808">Transferase</keyword>
<keyword id="KW-0819">tRNA processing</keyword>
<keyword id="KW-0820">tRNA-binding</keyword>
<reference key="1">
    <citation type="journal article" date="1996" name="Science">
        <title>Complete genome sequence of the methanogenic archaeon, Methanococcus jannaschii.</title>
        <authorList>
            <person name="Bult C.J."/>
            <person name="White O."/>
            <person name="Olsen G.J."/>
            <person name="Zhou L."/>
            <person name="Fleischmann R.D."/>
            <person name="Sutton G.G."/>
            <person name="Blake J.A."/>
            <person name="FitzGerald L.M."/>
            <person name="Clayton R.A."/>
            <person name="Gocayne J.D."/>
            <person name="Kerlavage A.R."/>
            <person name="Dougherty B.A."/>
            <person name="Tomb J.-F."/>
            <person name="Adams M.D."/>
            <person name="Reich C.I."/>
            <person name="Overbeek R."/>
            <person name="Kirkness E.F."/>
            <person name="Weinstock K.G."/>
            <person name="Merrick J.M."/>
            <person name="Glodek A."/>
            <person name="Scott J.L."/>
            <person name="Geoghagen N.S.M."/>
            <person name="Weidman J.F."/>
            <person name="Fuhrmann J.L."/>
            <person name="Nguyen D."/>
            <person name="Utterback T.R."/>
            <person name="Kelley J.M."/>
            <person name="Peterson J.D."/>
            <person name="Sadow P.W."/>
            <person name="Hanna M.C."/>
            <person name="Cotton M.D."/>
            <person name="Roberts K.M."/>
            <person name="Hurst M.A."/>
            <person name="Kaine B.P."/>
            <person name="Borodovsky M."/>
            <person name="Klenk H.-P."/>
            <person name="Fraser C.M."/>
            <person name="Smith H.O."/>
            <person name="Woese C.R."/>
            <person name="Venter J.C."/>
        </authorList>
    </citation>
    <scope>NUCLEOTIDE SEQUENCE [LARGE SCALE GENOMIC DNA]</scope>
    <source>
        <strain>ATCC 43067 / DSM 2661 / JAL-1 / JCM 10045 / NBRC 100440</strain>
    </source>
</reference>
<protein>
    <recommendedName>
        <fullName>tRNA (guanine(10)-N2)-dimethyltransferase</fullName>
        <ecNumber>2.1.1.213</ecNumber>
    </recommendedName>
    <alternativeName>
        <fullName>tRNA:G10 dimethyltransferase</fullName>
    </alternativeName>
</protein>
<organism>
    <name type="scientific">Methanocaldococcus jannaschii (strain ATCC 43067 / DSM 2661 / JAL-1 / JCM 10045 / NBRC 100440)</name>
    <name type="common">Methanococcus jannaschii</name>
    <dbReference type="NCBI Taxonomy" id="243232"/>
    <lineage>
        <taxon>Archaea</taxon>
        <taxon>Methanobacteriati</taxon>
        <taxon>Methanobacteriota</taxon>
        <taxon>Methanomada group</taxon>
        <taxon>Methanococci</taxon>
        <taxon>Methanococcales</taxon>
        <taxon>Methanocaldococcaceae</taxon>
        <taxon>Methanocaldococcus</taxon>
    </lineage>
</organism>
<feature type="chain" id="PRO_0000140481" description="tRNA (guanine(10)-N2)-dimethyltransferase">
    <location>
        <begin position="1"/>
        <end position="351"/>
    </location>
</feature>
<feature type="domain" description="THUMP" evidence="2">
    <location>
        <begin position="57"/>
        <end position="165"/>
    </location>
</feature>
<sequence length="351" mass="40483">MIGYVLNGEHEEIPYGELMALLEIFNYNGSVERLKRYVITEDSPAKDIVKRSGYIDEGHRIIFRYNLEEKSVDLVDKIVNDFINSFKDFVANIDYPDIDESKSYAVRVLKLHKDEFTKSIDSLRIEKEIGGIIKLKTNAKVNLTKPDILVRVVILENTFFISNVLEMRDREYFQKNRPHLRKYFHPGCMLPKLARAMVNLARVKEGDIVLDPFCGTGGFLIEAGLIGAKLIGCDIDWRMASGTLINLEEYNLLDKVIKVKRLDAKYVKEFLNELNIEKVDAIVTDPPYGISTAKKGEIEKILETLPEVIKDNGYFVFAYPKKIELDMELEGLYKVYIHKGLIRHIHVYKKI</sequence>
<evidence type="ECO:0000250" key="1"/>
<evidence type="ECO:0000255" key="2">
    <source>
        <dbReference type="PROSITE-ProRule" id="PRU00529"/>
    </source>
</evidence>
<evidence type="ECO:0000305" key="3"/>
<gene>
    <name type="primary">trmG10</name>
    <name type="ordered locus">MJ0710</name>
</gene>